<proteinExistence type="inferred from homology"/>
<accession>B1W443</accession>
<sequence length="127" mass="13271">MAKLSQDDLLAQFEEMTLIELSEFVKAFEEKFDVTAAAAVAVAGPAAGGAPAEAEAEQDEFDVILTGAGEKKIQVIKVVRELTSLGLKEAKDLVDGTPKPVLEKVAKEAAEKAAESLKAAGASVEVK</sequence>
<protein>
    <recommendedName>
        <fullName evidence="1">Large ribosomal subunit protein bL12</fullName>
    </recommendedName>
    <alternativeName>
        <fullName evidence="2">50S ribosomal protein L7/L12</fullName>
    </alternativeName>
</protein>
<gene>
    <name evidence="1" type="primary">rplL</name>
    <name type="ordered locus">SGR_2870</name>
</gene>
<name>RL7_STRGG</name>
<keyword id="KW-0687">Ribonucleoprotein</keyword>
<keyword id="KW-0689">Ribosomal protein</keyword>
<feature type="chain" id="PRO_1000133862" description="Large ribosomal subunit protein bL12">
    <location>
        <begin position="1"/>
        <end position="127"/>
    </location>
</feature>
<organism>
    <name type="scientific">Streptomyces griseus subsp. griseus (strain JCM 4626 / CBS 651.72 / NBRC 13350 / KCC S-0626 / ISP 5235)</name>
    <dbReference type="NCBI Taxonomy" id="455632"/>
    <lineage>
        <taxon>Bacteria</taxon>
        <taxon>Bacillati</taxon>
        <taxon>Actinomycetota</taxon>
        <taxon>Actinomycetes</taxon>
        <taxon>Kitasatosporales</taxon>
        <taxon>Streptomycetaceae</taxon>
        <taxon>Streptomyces</taxon>
    </lineage>
</organism>
<comment type="function">
    <text evidence="1">Forms part of the ribosomal stalk which helps the ribosome interact with GTP-bound translation factors. Is thus essential for accurate translation.</text>
</comment>
<comment type="subunit">
    <text evidence="1">Homodimer. Part of the ribosomal stalk of the 50S ribosomal subunit. Forms a multimeric L10(L12)X complex, where L10 forms an elongated spine to which 2 to 4 L12 dimers bind in a sequential fashion. Binds GTP-bound translation factors.</text>
</comment>
<comment type="similarity">
    <text evidence="1">Belongs to the bacterial ribosomal protein bL12 family.</text>
</comment>
<evidence type="ECO:0000255" key="1">
    <source>
        <dbReference type="HAMAP-Rule" id="MF_00368"/>
    </source>
</evidence>
<evidence type="ECO:0000305" key="2"/>
<reference key="1">
    <citation type="journal article" date="2008" name="J. Bacteriol.">
        <title>Genome sequence of the streptomycin-producing microorganism Streptomyces griseus IFO 13350.</title>
        <authorList>
            <person name="Ohnishi Y."/>
            <person name="Ishikawa J."/>
            <person name="Hara H."/>
            <person name="Suzuki H."/>
            <person name="Ikenoya M."/>
            <person name="Ikeda H."/>
            <person name="Yamashita A."/>
            <person name="Hattori M."/>
            <person name="Horinouchi S."/>
        </authorList>
    </citation>
    <scope>NUCLEOTIDE SEQUENCE [LARGE SCALE GENOMIC DNA]</scope>
    <source>
        <strain>JCM 4626 / CBS 651.72 / NBRC 13350 / KCC S-0626 / ISP 5235</strain>
    </source>
</reference>
<dbReference type="EMBL" id="AP009493">
    <property type="protein sequence ID" value="BAG19699.1"/>
    <property type="molecule type" value="Genomic_DNA"/>
</dbReference>
<dbReference type="RefSeq" id="WP_003966996.1">
    <property type="nucleotide sequence ID" value="NC_010572.1"/>
</dbReference>
<dbReference type="SMR" id="B1W443"/>
<dbReference type="KEGG" id="sgr:SGR_2870"/>
<dbReference type="eggNOG" id="COG0222">
    <property type="taxonomic scope" value="Bacteria"/>
</dbReference>
<dbReference type="HOGENOM" id="CLU_086499_3_0_11"/>
<dbReference type="Proteomes" id="UP000001685">
    <property type="component" value="Chromosome"/>
</dbReference>
<dbReference type="GO" id="GO:0022625">
    <property type="term" value="C:cytosolic large ribosomal subunit"/>
    <property type="evidence" value="ECO:0007669"/>
    <property type="project" value="TreeGrafter"/>
</dbReference>
<dbReference type="GO" id="GO:0003729">
    <property type="term" value="F:mRNA binding"/>
    <property type="evidence" value="ECO:0007669"/>
    <property type="project" value="TreeGrafter"/>
</dbReference>
<dbReference type="GO" id="GO:0003735">
    <property type="term" value="F:structural constituent of ribosome"/>
    <property type="evidence" value="ECO:0007669"/>
    <property type="project" value="InterPro"/>
</dbReference>
<dbReference type="GO" id="GO:0006412">
    <property type="term" value="P:translation"/>
    <property type="evidence" value="ECO:0007669"/>
    <property type="project" value="UniProtKB-UniRule"/>
</dbReference>
<dbReference type="CDD" id="cd00387">
    <property type="entry name" value="Ribosomal_L7_L12"/>
    <property type="match status" value="1"/>
</dbReference>
<dbReference type="FunFam" id="1.20.5.710:FF:000005">
    <property type="entry name" value="50S ribosomal protein L7/L12"/>
    <property type="match status" value="1"/>
</dbReference>
<dbReference type="FunFam" id="3.30.1390.10:FF:000001">
    <property type="entry name" value="50S ribosomal protein L7/L12"/>
    <property type="match status" value="1"/>
</dbReference>
<dbReference type="Gene3D" id="3.30.1390.10">
    <property type="match status" value="1"/>
</dbReference>
<dbReference type="Gene3D" id="1.20.5.710">
    <property type="entry name" value="Single helix bin"/>
    <property type="match status" value="1"/>
</dbReference>
<dbReference type="HAMAP" id="MF_00368">
    <property type="entry name" value="Ribosomal_bL12"/>
    <property type="match status" value="1"/>
</dbReference>
<dbReference type="InterPro" id="IPR000206">
    <property type="entry name" value="Ribosomal_bL12"/>
</dbReference>
<dbReference type="InterPro" id="IPR013823">
    <property type="entry name" value="Ribosomal_bL12_C"/>
</dbReference>
<dbReference type="InterPro" id="IPR014719">
    <property type="entry name" value="Ribosomal_bL12_C/ClpS-like"/>
</dbReference>
<dbReference type="InterPro" id="IPR008932">
    <property type="entry name" value="Ribosomal_bL12_oligo"/>
</dbReference>
<dbReference type="InterPro" id="IPR036235">
    <property type="entry name" value="Ribosomal_bL12_oligo_N_sf"/>
</dbReference>
<dbReference type="NCBIfam" id="TIGR00855">
    <property type="entry name" value="L12"/>
    <property type="match status" value="1"/>
</dbReference>
<dbReference type="PANTHER" id="PTHR45987">
    <property type="entry name" value="39S RIBOSOMAL PROTEIN L12"/>
    <property type="match status" value="1"/>
</dbReference>
<dbReference type="PANTHER" id="PTHR45987:SF4">
    <property type="entry name" value="LARGE RIBOSOMAL SUBUNIT PROTEIN BL12M"/>
    <property type="match status" value="1"/>
</dbReference>
<dbReference type="Pfam" id="PF00542">
    <property type="entry name" value="Ribosomal_L12"/>
    <property type="match status" value="1"/>
</dbReference>
<dbReference type="Pfam" id="PF16320">
    <property type="entry name" value="Ribosomal_L12_N"/>
    <property type="match status" value="1"/>
</dbReference>
<dbReference type="SUPFAM" id="SSF54736">
    <property type="entry name" value="ClpS-like"/>
    <property type="match status" value="1"/>
</dbReference>
<dbReference type="SUPFAM" id="SSF48300">
    <property type="entry name" value="Ribosomal protein L7/12, oligomerisation (N-terminal) domain"/>
    <property type="match status" value="1"/>
</dbReference>